<feature type="chain" id="PRO_1000198032" description="Queuine tRNA-ribosyltransferase">
    <location>
        <begin position="1"/>
        <end position="383"/>
    </location>
</feature>
<feature type="region of interest" description="RNA binding" evidence="1">
    <location>
        <begin position="245"/>
        <end position="251"/>
    </location>
</feature>
<feature type="region of interest" description="RNA binding; important for wobble base 34 recognition" evidence="1">
    <location>
        <begin position="269"/>
        <end position="273"/>
    </location>
</feature>
<feature type="active site" description="Proton acceptor" evidence="1">
    <location>
        <position position="89"/>
    </location>
</feature>
<feature type="active site" description="Nucleophile" evidence="1">
    <location>
        <position position="264"/>
    </location>
</feature>
<feature type="binding site" evidence="1">
    <location>
        <begin position="89"/>
        <end position="93"/>
    </location>
    <ligand>
        <name>substrate</name>
    </ligand>
</feature>
<feature type="binding site" evidence="1">
    <location>
        <position position="143"/>
    </location>
    <ligand>
        <name>substrate</name>
    </ligand>
</feature>
<feature type="binding site" evidence="1">
    <location>
        <position position="187"/>
    </location>
    <ligand>
        <name>substrate</name>
    </ligand>
</feature>
<feature type="binding site" evidence="1">
    <location>
        <position position="214"/>
    </location>
    <ligand>
        <name>substrate</name>
    </ligand>
</feature>
<feature type="binding site" evidence="1">
    <location>
        <position position="302"/>
    </location>
    <ligand>
        <name>Zn(2+)</name>
        <dbReference type="ChEBI" id="CHEBI:29105"/>
    </ligand>
</feature>
<feature type="binding site" evidence="1">
    <location>
        <position position="304"/>
    </location>
    <ligand>
        <name>Zn(2+)</name>
        <dbReference type="ChEBI" id="CHEBI:29105"/>
    </ligand>
</feature>
<feature type="binding site" evidence="1">
    <location>
        <position position="307"/>
    </location>
    <ligand>
        <name>Zn(2+)</name>
        <dbReference type="ChEBI" id="CHEBI:29105"/>
    </ligand>
</feature>
<feature type="binding site" evidence="1">
    <location>
        <position position="333"/>
    </location>
    <ligand>
        <name>Zn(2+)</name>
        <dbReference type="ChEBI" id="CHEBI:29105"/>
    </ligand>
</feature>
<accession>B5YHX4</accession>
<name>TGT_THEYD</name>
<dbReference type="EC" id="2.4.2.29" evidence="1"/>
<dbReference type="EMBL" id="CP001147">
    <property type="protein sequence ID" value="ACI21865.1"/>
    <property type="molecule type" value="Genomic_DNA"/>
</dbReference>
<dbReference type="RefSeq" id="WP_012546567.1">
    <property type="nucleotide sequence ID" value="NC_011296.1"/>
</dbReference>
<dbReference type="RefSeq" id="YP_002248040.1">
    <property type="nucleotide sequence ID" value="NC_011296.1"/>
</dbReference>
<dbReference type="SMR" id="B5YHX4"/>
<dbReference type="FunCoup" id="B5YHX4">
    <property type="interactions" value="439"/>
</dbReference>
<dbReference type="STRING" id="289376.THEYE_A0190"/>
<dbReference type="EnsemblBacteria" id="ACI21865">
    <property type="protein sequence ID" value="ACI21865"/>
    <property type="gene ID" value="THEYE_A0190"/>
</dbReference>
<dbReference type="KEGG" id="tye:THEYE_A0190"/>
<dbReference type="PATRIC" id="fig|289376.4.peg.187"/>
<dbReference type="eggNOG" id="COG0343">
    <property type="taxonomic scope" value="Bacteria"/>
</dbReference>
<dbReference type="HOGENOM" id="CLU_022060_0_1_0"/>
<dbReference type="InParanoid" id="B5YHX4"/>
<dbReference type="OrthoDB" id="9805417at2"/>
<dbReference type="UniPathway" id="UPA00392"/>
<dbReference type="Proteomes" id="UP000000718">
    <property type="component" value="Chromosome"/>
</dbReference>
<dbReference type="GO" id="GO:0005737">
    <property type="term" value="C:cytoplasm"/>
    <property type="evidence" value="ECO:0000318"/>
    <property type="project" value="GO_Central"/>
</dbReference>
<dbReference type="GO" id="GO:0005829">
    <property type="term" value="C:cytosol"/>
    <property type="evidence" value="ECO:0000318"/>
    <property type="project" value="GO_Central"/>
</dbReference>
<dbReference type="GO" id="GO:0046872">
    <property type="term" value="F:metal ion binding"/>
    <property type="evidence" value="ECO:0007669"/>
    <property type="project" value="UniProtKB-KW"/>
</dbReference>
<dbReference type="GO" id="GO:0008479">
    <property type="term" value="F:tRNA-guanosine(34) queuine transglycosylase activity"/>
    <property type="evidence" value="ECO:0007669"/>
    <property type="project" value="UniProtKB-UniRule"/>
</dbReference>
<dbReference type="GO" id="GO:0008616">
    <property type="term" value="P:queuosine biosynthetic process"/>
    <property type="evidence" value="ECO:0000318"/>
    <property type="project" value="GO_Central"/>
</dbReference>
<dbReference type="GO" id="GO:0002099">
    <property type="term" value="P:tRNA wobble guanine modification"/>
    <property type="evidence" value="ECO:0000318"/>
    <property type="project" value="GO_Central"/>
</dbReference>
<dbReference type="GO" id="GO:0101030">
    <property type="term" value="P:tRNA-guanine transglycosylation"/>
    <property type="evidence" value="ECO:0007669"/>
    <property type="project" value="InterPro"/>
</dbReference>
<dbReference type="FunFam" id="3.20.20.105:FF:000001">
    <property type="entry name" value="Queuine tRNA-ribosyltransferase"/>
    <property type="match status" value="1"/>
</dbReference>
<dbReference type="Gene3D" id="3.20.20.105">
    <property type="entry name" value="Queuine tRNA-ribosyltransferase-like"/>
    <property type="match status" value="1"/>
</dbReference>
<dbReference type="HAMAP" id="MF_00168">
    <property type="entry name" value="Q_tRNA_Tgt"/>
    <property type="match status" value="1"/>
</dbReference>
<dbReference type="InterPro" id="IPR050076">
    <property type="entry name" value="ArchSynthase1/Queuine_TRR"/>
</dbReference>
<dbReference type="InterPro" id="IPR004803">
    <property type="entry name" value="TGT"/>
</dbReference>
<dbReference type="InterPro" id="IPR036511">
    <property type="entry name" value="TGT-like_sf"/>
</dbReference>
<dbReference type="InterPro" id="IPR002616">
    <property type="entry name" value="tRNA_ribo_trans-like"/>
</dbReference>
<dbReference type="NCBIfam" id="TIGR00430">
    <property type="entry name" value="Q_tRNA_tgt"/>
    <property type="match status" value="1"/>
</dbReference>
<dbReference type="NCBIfam" id="TIGR00449">
    <property type="entry name" value="tgt_general"/>
    <property type="match status" value="1"/>
</dbReference>
<dbReference type="PANTHER" id="PTHR46499">
    <property type="entry name" value="QUEUINE TRNA-RIBOSYLTRANSFERASE"/>
    <property type="match status" value="1"/>
</dbReference>
<dbReference type="PANTHER" id="PTHR46499:SF1">
    <property type="entry name" value="QUEUINE TRNA-RIBOSYLTRANSFERASE"/>
    <property type="match status" value="1"/>
</dbReference>
<dbReference type="Pfam" id="PF01702">
    <property type="entry name" value="TGT"/>
    <property type="match status" value="1"/>
</dbReference>
<dbReference type="SUPFAM" id="SSF51713">
    <property type="entry name" value="tRNA-guanine transglycosylase"/>
    <property type="match status" value="1"/>
</dbReference>
<protein>
    <recommendedName>
        <fullName evidence="1">Queuine tRNA-ribosyltransferase</fullName>
        <ecNumber evidence="1">2.4.2.29</ecNumber>
    </recommendedName>
    <alternativeName>
        <fullName evidence="1">Guanine insertion enzyme</fullName>
    </alternativeName>
    <alternativeName>
        <fullName evidence="1">tRNA-guanine transglycosylase</fullName>
    </alternativeName>
</protein>
<sequence>MRFKILQKDGLARTGIIETQRGIIHTPAFMPVGTNGTVKAMTPEEVRQIGYEIILSNTYHLYLRPGHETIKMIGGIHKFINWHCPILTDSGGFQIYSLASLRKITLEGVEFRSHIDGSLHFINPEKAIDIQLALGSDIMMVLDECIPYPADEEYVEKSIKLTTEWAKRCKEHFEKQDTYQALFGIIQGGVFSDLRIRALEELLKIDFHGYAIGGLSVGEPKTDMYKIVKDISPLMPEDKPHYLMGVGDLIDVLHAVEHGIDMFDCVIPTRNARNGTLFTSQGRISIKRSEFKEDLSPLDPDCDCYTCKNYSRAFLRHLYTCREILSMRLNTIHNLYFYCRFFEKMRQAIAERRFQEFKKEWLPVLEKNFYQESNDFHHSLENY</sequence>
<proteinExistence type="inferred from homology"/>
<gene>
    <name evidence="1" type="primary">tgt</name>
    <name type="ordered locus">THEYE_A0190</name>
</gene>
<organism>
    <name type="scientific">Thermodesulfovibrio yellowstonii (strain ATCC 51303 / DSM 11347 / YP87)</name>
    <dbReference type="NCBI Taxonomy" id="289376"/>
    <lineage>
        <taxon>Bacteria</taxon>
        <taxon>Pseudomonadati</taxon>
        <taxon>Nitrospirota</taxon>
        <taxon>Thermodesulfovibrionia</taxon>
        <taxon>Thermodesulfovibrionales</taxon>
        <taxon>Thermodesulfovibrionaceae</taxon>
        <taxon>Thermodesulfovibrio</taxon>
    </lineage>
</organism>
<comment type="function">
    <text evidence="1">Catalyzes the base-exchange of a guanine (G) residue with the queuine precursor 7-aminomethyl-7-deazaguanine (PreQ1) at position 34 (anticodon wobble position) in tRNAs with GU(N) anticodons (tRNA-Asp, -Asn, -His and -Tyr). Catalysis occurs through a double-displacement mechanism. The nucleophile active site attacks the C1' of nucleotide 34 to detach the guanine base from the RNA, forming a covalent enzyme-RNA intermediate. The proton acceptor active site deprotonates the incoming PreQ1, allowing a nucleophilic attack on the C1' of the ribose to form the product. After dissociation, two additional enzymatic reactions on the tRNA convert PreQ1 to queuine (Q), resulting in the hypermodified nucleoside queuosine (7-(((4,5-cis-dihydroxy-2-cyclopenten-1-yl)amino)methyl)-7-deazaguanosine).</text>
</comment>
<comment type="catalytic activity">
    <reaction evidence="1">
        <text>7-aminomethyl-7-carbaguanine + guanosine(34) in tRNA = 7-aminomethyl-7-carbaguanosine(34) in tRNA + guanine</text>
        <dbReference type="Rhea" id="RHEA:24104"/>
        <dbReference type="Rhea" id="RHEA-COMP:10341"/>
        <dbReference type="Rhea" id="RHEA-COMP:10342"/>
        <dbReference type="ChEBI" id="CHEBI:16235"/>
        <dbReference type="ChEBI" id="CHEBI:58703"/>
        <dbReference type="ChEBI" id="CHEBI:74269"/>
        <dbReference type="ChEBI" id="CHEBI:82833"/>
        <dbReference type="EC" id="2.4.2.29"/>
    </reaction>
</comment>
<comment type="cofactor">
    <cofactor evidence="1">
        <name>Zn(2+)</name>
        <dbReference type="ChEBI" id="CHEBI:29105"/>
    </cofactor>
    <text evidence="1">Binds 1 zinc ion per subunit.</text>
</comment>
<comment type="pathway">
    <text evidence="1">tRNA modification; tRNA-queuosine biosynthesis.</text>
</comment>
<comment type="subunit">
    <text evidence="1">Homodimer. Within each dimer, one monomer is responsible for RNA recognition and catalysis, while the other monomer binds to the replacement base PreQ1.</text>
</comment>
<comment type="similarity">
    <text evidence="1">Belongs to the queuine tRNA-ribosyltransferase family.</text>
</comment>
<keyword id="KW-0328">Glycosyltransferase</keyword>
<keyword id="KW-0479">Metal-binding</keyword>
<keyword id="KW-0671">Queuosine biosynthesis</keyword>
<keyword id="KW-1185">Reference proteome</keyword>
<keyword id="KW-0808">Transferase</keyword>
<keyword id="KW-0819">tRNA processing</keyword>
<keyword id="KW-0862">Zinc</keyword>
<evidence type="ECO:0000255" key="1">
    <source>
        <dbReference type="HAMAP-Rule" id="MF_00168"/>
    </source>
</evidence>
<reference key="1">
    <citation type="submission" date="2008-08" db="EMBL/GenBank/DDBJ databases">
        <title>The complete genome sequence of Thermodesulfovibrio yellowstonii strain ATCC 51303 / DSM 11347 / YP87.</title>
        <authorList>
            <person name="Dodson R.J."/>
            <person name="Durkin A.S."/>
            <person name="Wu M."/>
            <person name="Eisen J."/>
            <person name="Sutton G."/>
        </authorList>
    </citation>
    <scope>NUCLEOTIDE SEQUENCE [LARGE SCALE GENOMIC DNA]</scope>
    <source>
        <strain>ATCC 51303 / DSM 11347 / YP87</strain>
    </source>
</reference>